<evidence type="ECO:0000255" key="1">
    <source>
        <dbReference type="HAMAP-Rule" id="MF_00801"/>
    </source>
</evidence>
<evidence type="ECO:0000256" key="2">
    <source>
        <dbReference type="SAM" id="MobiDB-lite"/>
    </source>
</evidence>
<protein>
    <recommendedName>
        <fullName evidence="1">Endonuclease V</fullName>
        <ecNumber evidence="1">3.1.21.7</ecNumber>
    </recommendedName>
    <alternativeName>
        <fullName evidence="1">Deoxyinosine 3'endonuclease</fullName>
    </alternativeName>
    <alternativeName>
        <fullName evidence="1">Deoxyribonuclease V</fullName>
        <shortName evidence="1">DNase V</shortName>
    </alternativeName>
</protein>
<organism>
    <name type="scientific">Pyrococcus horikoshii (strain ATCC 700860 / DSM 12428 / JCM 9974 / NBRC 100139 / OT-3)</name>
    <dbReference type="NCBI Taxonomy" id="70601"/>
    <lineage>
        <taxon>Archaea</taxon>
        <taxon>Methanobacteriati</taxon>
        <taxon>Methanobacteriota</taxon>
        <taxon>Thermococci</taxon>
        <taxon>Thermococcales</taxon>
        <taxon>Thermococcaceae</taxon>
        <taxon>Pyrococcus</taxon>
    </lineage>
</organism>
<comment type="function">
    <text evidence="1">DNA repair enzyme involved in the repair of deaminated bases. Selectively cleaves double-stranded DNA at the second phosphodiester bond 3' to a deoxyinosine leaving behind the intact lesion on the nicked DNA.</text>
</comment>
<comment type="catalytic activity">
    <reaction evidence="1">
        <text>Endonucleolytic cleavage at apurinic or apyrimidinic sites to products with a 5'-phosphate.</text>
        <dbReference type="EC" id="3.1.21.7"/>
    </reaction>
</comment>
<comment type="cofactor">
    <cofactor evidence="1">
        <name>Mg(2+)</name>
        <dbReference type="ChEBI" id="CHEBI:18420"/>
    </cofactor>
</comment>
<comment type="subcellular location">
    <subcellularLocation>
        <location evidence="1">Cytoplasm</location>
    </subcellularLocation>
</comment>
<comment type="similarity">
    <text evidence="1">Belongs to the endonuclease V family.</text>
</comment>
<dbReference type="EC" id="3.1.21.7" evidence="1"/>
<dbReference type="EMBL" id="BA000001">
    <property type="protein sequence ID" value="BAA29752.1"/>
    <property type="molecule type" value="Genomic_DNA"/>
</dbReference>
<dbReference type="PIR" id="F71111">
    <property type="entry name" value="F71111"/>
</dbReference>
<dbReference type="RefSeq" id="WP_010884755.1">
    <property type="nucleotide sequence ID" value="NC_000961.1"/>
</dbReference>
<dbReference type="SMR" id="O58394"/>
<dbReference type="STRING" id="70601.gene:9377605"/>
<dbReference type="EnsemblBacteria" id="BAA29752">
    <property type="protein sequence ID" value="BAA29752"/>
    <property type="gene ID" value="BAA29752"/>
</dbReference>
<dbReference type="GeneID" id="1442990"/>
<dbReference type="KEGG" id="pho:PH0661"/>
<dbReference type="eggNOG" id="arCOG00929">
    <property type="taxonomic scope" value="Archaea"/>
</dbReference>
<dbReference type="OrthoDB" id="7885at2157"/>
<dbReference type="Proteomes" id="UP000000752">
    <property type="component" value="Chromosome"/>
</dbReference>
<dbReference type="GO" id="GO:0005737">
    <property type="term" value="C:cytoplasm"/>
    <property type="evidence" value="ECO:0007669"/>
    <property type="project" value="UniProtKB-SubCell"/>
</dbReference>
<dbReference type="GO" id="GO:0043737">
    <property type="term" value="F:deoxyribonuclease V activity"/>
    <property type="evidence" value="ECO:0007669"/>
    <property type="project" value="UniProtKB-UniRule"/>
</dbReference>
<dbReference type="GO" id="GO:0000287">
    <property type="term" value="F:magnesium ion binding"/>
    <property type="evidence" value="ECO:0007669"/>
    <property type="project" value="UniProtKB-UniRule"/>
</dbReference>
<dbReference type="GO" id="GO:0016891">
    <property type="term" value="F:RNA endonuclease activity, producing 5'-phosphomonoesters"/>
    <property type="evidence" value="ECO:0007669"/>
    <property type="project" value="TreeGrafter"/>
</dbReference>
<dbReference type="GO" id="GO:0003727">
    <property type="term" value="F:single-stranded RNA binding"/>
    <property type="evidence" value="ECO:0007669"/>
    <property type="project" value="TreeGrafter"/>
</dbReference>
<dbReference type="GO" id="GO:0006281">
    <property type="term" value="P:DNA repair"/>
    <property type="evidence" value="ECO:0007669"/>
    <property type="project" value="UniProtKB-UniRule"/>
</dbReference>
<dbReference type="CDD" id="cd06559">
    <property type="entry name" value="Endonuclease_V"/>
    <property type="match status" value="1"/>
</dbReference>
<dbReference type="Gene3D" id="3.30.2170.10">
    <property type="entry name" value="archaeoglobus fulgidus dsm 4304 superfamily"/>
    <property type="match status" value="1"/>
</dbReference>
<dbReference type="HAMAP" id="MF_00801">
    <property type="entry name" value="Endonuclease_5"/>
    <property type="match status" value="1"/>
</dbReference>
<dbReference type="InterPro" id="IPR007581">
    <property type="entry name" value="Endonuclease-V"/>
</dbReference>
<dbReference type="PANTHER" id="PTHR28511">
    <property type="entry name" value="ENDONUCLEASE V"/>
    <property type="match status" value="1"/>
</dbReference>
<dbReference type="PANTHER" id="PTHR28511:SF1">
    <property type="entry name" value="ENDONUCLEASE V"/>
    <property type="match status" value="1"/>
</dbReference>
<dbReference type="Pfam" id="PF04493">
    <property type="entry name" value="Endonuclease_5"/>
    <property type="match status" value="1"/>
</dbReference>
<feature type="chain" id="PRO_0000159692" description="Endonuclease V">
    <location>
        <begin position="1"/>
        <end position="211"/>
    </location>
</feature>
<feature type="region of interest" description="Disordered" evidence="2">
    <location>
        <begin position="182"/>
        <end position="211"/>
    </location>
</feature>
<feature type="binding site" evidence="1">
    <location>
        <position position="31"/>
    </location>
    <ligand>
        <name>Mg(2+)</name>
        <dbReference type="ChEBI" id="CHEBI:18420"/>
    </ligand>
</feature>
<feature type="binding site" evidence="1">
    <location>
        <position position="95"/>
    </location>
    <ligand>
        <name>Mg(2+)</name>
        <dbReference type="ChEBI" id="CHEBI:18420"/>
    </ligand>
</feature>
<feature type="site" description="Interaction with target DNA" evidence="1">
    <location>
        <position position="67"/>
    </location>
</feature>
<keyword id="KW-0963">Cytoplasm</keyword>
<keyword id="KW-0227">DNA damage</keyword>
<keyword id="KW-0234">DNA repair</keyword>
<keyword id="KW-0255">Endonuclease</keyword>
<keyword id="KW-0378">Hydrolase</keyword>
<keyword id="KW-0460">Magnesium</keyword>
<keyword id="KW-0479">Metal-binding</keyword>
<keyword id="KW-0540">Nuclease</keyword>
<proteinExistence type="inferred from homology"/>
<sequence>MLERIANIQKKLSKSIVERKINEVRKVAAVDVSYKEEKARAALVITTFPEGEVLKTKVIETTVSFPYIPTFFFLRETKPILIATKGETFDVLIVEGHGKAHPRGYGLASHIGVVLRKPTIGVAKRLLKNTPKDTYKKVGKVYVSVGNLITLEDATKIIRAILDESGYPKPLKLADKLSKGRIYEVKNTPSPNRSRKKRGNRGKDNNNSQGN</sequence>
<gene>
    <name evidence="1" type="primary">nfi</name>
    <name type="ordered locus">PH0661</name>
</gene>
<name>NFI_PYRHO</name>
<reference key="1">
    <citation type="journal article" date="1998" name="DNA Res.">
        <title>Complete sequence and gene organization of the genome of a hyper-thermophilic archaebacterium, Pyrococcus horikoshii OT3.</title>
        <authorList>
            <person name="Kawarabayasi Y."/>
            <person name="Sawada M."/>
            <person name="Horikawa H."/>
            <person name="Haikawa Y."/>
            <person name="Hino Y."/>
            <person name="Yamamoto S."/>
            <person name="Sekine M."/>
            <person name="Baba S."/>
            <person name="Kosugi H."/>
            <person name="Hosoyama A."/>
            <person name="Nagai Y."/>
            <person name="Sakai M."/>
            <person name="Ogura K."/>
            <person name="Otsuka R."/>
            <person name="Nakazawa H."/>
            <person name="Takamiya M."/>
            <person name="Ohfuku Y."/>
            <person name="Funahashi T."/>
            <person name="Tanaka T."/>
            <person name="Kudoh Y."/>
            <person name="Yamazaki J."/>
            <person name="Kushida N."/>
            <person name="Oguchi A."/>
            <person name="Aoki K."/>
            <person name="Yoshizawa T."/>
            <person name="Nakamura Y."/>
            <person name="Robb F.T."/>
            <person name="Horikoshi K."/>
            <person name="Masuchi Y."/>
            <person name="Shizuya H."/>
            <person name="Kikuchi H."/>
        </authorList>
    </citation>
    <scope>NUCLEOTIDE SEQUENCE [LARGE SCALE GENOMIC DNA]</scope>
    <source>
        <strain>ATCC 700860 / DSM 12428 / JCM 9974 / NBRC 100139 / OT-3</strain>
    </source>
</reference>
<accession>O58394</accession>